<evidence type="ECO:0000255" key="1">
    <source>
        <dbReference type="HAMAP-Rule" id="MF_00181"/>
    </source>
</evidence>
<dbReference type="EC" id="3.4.11.1" evidence="1"/>
<dbReference type="EC" id="3.4.11.10" evidence="1"/>
<dbReference type="EMBL" id="CP000570">
    <property type="protein sequence ID" value="ABN84939.1"/>
    <property type="molecule type" value="Genomic_DNA"/>
</dbReference>
<dbReference type="RefSeq" id="WP_004522572.1">
    <property type="nucleotide sequence ID" value="NC_009074.1"/>
</dbReference>
<dbReference type="SMR" id="A3N6U4"/>
<dbReference type="MEROPS" id="M17.003"/>
<dbReference type="KEGG" id="bpd:BURPS668_1015"/>
<dbReference type="HOGENOM" id="CLU_013734_2_2_4"/>
<dbReference type="GO" id="GO:0005737">
    <property type="term" value="C:cytoplasm"/>
    <property type="evidence" value="ECO:0007669"/>
    <property type="project" value="UniProtKB-SubCell"/>
</dbReference>
<dbReference type="GO" id="GO:0030145">
    <property type="term" value="F:manganese ion binding"/>
    <property type="evidence" value="ECO:0007669"/>
    <property type="project" value="UniProtKB-UniRule"/>
</dbReference>
<dbReference type="GO" id="GO:0070006">
    <property type="term" value="F:metalloaminopeptidase activity"/>
    <property type="evidence" value="ECO:0007669"/>
    <property type="project" value="InterPro"/>
</dbReference>
<dbReference type="GO" id="GO:0006508">
    <property type="term" value="P:proteolysis"/>
    <property type="evidence" value="ECO:0007669"/>
    <property type="project" value="UniProtKB-KW"/>
</dbReference>
<dbReference type="CDD" id="cd00433">
    <property type="entry name" value="Peptidase_M17"/>
    <property type="match status" value="1"/>
</dbReference>
<dbReference type="FunFam" id="3.40.630.10:FF:000004">
    <property type="entry name" value="Probable cytosol aminopeptidase"/>
    <property type="match status" value="1"/>
</dbReference>
<dbReference type="Gene3D" id="3.40.220.10">
    <property type="entry name" value="Leucine Aminopeptidase, subunit E, domain 1"/>
    <property type="match status" value="1"/>
</dbReference>
<dbReference type="Gene3D" id="3.40.630.10">
    <property type="entry name" value="Zn peptidases"/>
    <property type="match status" value="1"/>
</dbReference>
<dbReference type="HAMAP" id="MF_00181">
    <property type="entry name" value="Cytosol_peptidase_M17"/>
    <property type="match status" value="1"/>
</dbReference>
<dbReference type="InterPro" id="IPR011356">
    <property type="entry name" value="Leucine_aapep/pepB"/>
</dbReference>
<dbReference type="InterPro" id="IPR043472">
    <property type="entry name" value="Macro_dom-like"/>
</dbReference>
<dbReference type="InterPro" id="IPR000819">
    <property type="entry name" value="Peptidase_M17_C"/>
</dbReference>
<dbReference type="InterPro" id="IPR023042">
    <property type="entry name" value="Peptidase_M17_leu_NH2_pept"/>
</dbReference>
<dbReference type="InterPro" id="IPR008283">
    <property type="entry name" value="Peptidase_M17_N"/>
</dbReference>
<dbReference type="NCBIfam" id="NF002073">
    <property type="entry name" value="PRK00913.1-2"/>
    <property type="match status" value="1"/>
</dbReference>
<dbReference type="NCBIfam" id="NF002074">
    <property type="entry name" value="PRK00913.1-4"/>
    <property type="match status" value="1"/>
</dbReference>
<dbReference type="NCBIfam" id="NF002077">
    <property type="entry name" value="PRK00913.2-4"/>
    <property type="match status" value="1"/>
</dbReference>
<dbReference type="NCBIfam" id="NF002083">
    <property type="entry name" value="PRK00913.3-5"/>
    <property type="match status" value="1"/>
</dbReference>
<dbReference type="PANTHER" id="PTHR11963:SF23">
    <property type="entry name" value="CYTOSOL AMINOPEPTIDASE"/>
    <property type="match status" value="1"/>
</dbReference>
<dbReference type="PANTHER" id="PTHR11963">
    <property type="entry name" value="LEUCINE AMINOPEPTIDASE-RELATED"/>
    <property type="match status" value="1"/>
</dbReference>
<dbReference type="Pfam" id="PF00883">
    <property type="entry name" value="Peptidase_M17"/>
    <property type="match status" value="1"/>
</dbReference>
<dbReference type="Pfam" id="PF02789">
    <property type="entry name" value="Peptidase_M17_N"/>
    <property type="match status" value="1"/>
</dbReference>
<dbReference type="PRINTS" id="PR00481">
    <property type="entry name" value="LAMNOPPTDASE"/>
</dbReference>
<dbReference type="SUPFAM" id="SSF52949">
    <property type="entry name" value="Macro domain-like"/>
    <property type="match status" value="1"/>
</dbReference>
<dbReference type="SUPFAM" id="SSF53187">
    <property type="entry name" value="Zn-dependent exopeptidases"/>
    <property type="match status" value="1"/>
</dbReference>
<dbReference type="PROSITE" id="PS00631">
    <property type="entry name" value="CYTOSOL_AP"/>
    <property type="match status" value="1"/>
</dbReference>
<sequence>MDFSIKGCDWSKGTANGFLTGKSDCIVLGVFEAQTLSGAALDIDEATKGLVSRVIKAGDIDGKLGKTLFLHEVSGIGASRVLLVGLGRQDAFSQKAYGDAAKAAWRALLGTKVVQVTFTLAQLPVPERASDWGVRAAILALRNETYKFTQMKSKPDAGAPALKRVVFSVDPADDKAAKVAAKQAVALANGMDLTRDLGNLPGNVCTPTYLANTAKKIAKDWGLKVDVLGLKQIQALKMGSFLSVAKGSVEPPQFIVLQYRGAAAKAAPVVLVGKGITFDSGGISLKPGEGMDEMKYDMCGAGSVLGTMRAVAEMGLKVNVVAIVPTCENMPAGNANKPGDIVTSMKGLTIEVLNTDAEGRLILCDALTYAERFKPAAVIDVATLTGACIIALGHHNTGLFSKDDALAGELLDASREAGDPAWRLPLDDEYQDQLKSNFADLANIGGRPAGSVTAACFLSRFAENYPWAHLDIAGTAWKSGAAKGATGRPVPLLAQFLIDRAGA</sequence>
<protein>
    <recommendedName>
        <fullName evidence="1">Probable cytosol aminopeptidase</fullName>
        <ecNumber evidence="1">3.4.11.1</ecNumber>
    </recommendedName>
    <alternativeName>
        <fullName evidence="1">Leucine aminopeptidase</fullName>
        <shortName evidence="1">LAP</shortName>
        <ecNumber evidence="1">3.4.11.10</ecNumber>
    </alternativeName>
    <alternativeName>
        <fullName evidence="1">Leucyl aminopeptidase</fullName>
    </alternativeName>
</protein>
<organism>
    <name type="scientific">Burkholderia pseudomallei (strain 668)</name>
    <dbReference type="NCBI Taxonomy" id="320373"/>
    <lineage>
        <taxon>Bacteria</taxon>
        <taxon>Pseudomonadati</taxon>
        <taxon>Pseudomonadota</taxon>
        <taxon>Betaproteobacteria</taxon>
        <taxon>Burkholderiales</taxon>
        <taxon>Burkholderiaceae</taxon>
        <taxon>Burkholderia</taxon>
        <taxon>pseudomallei group</taxon>
    </lineage>
</organism>
<proteinExistence type="inferred from homology"/>
<feature type="chain" id="PRO_1000019898" description="Probable cytosol aminopeptidase">
    <location>
        <begin position="1"/>
        <end position="503"/>
    </location>
</feature>
<feature type="active site" evidence="1">
    <location>
        <position position="286"/>
    </location>
</feature>
<feature type="active site" evidence="1">
    <location>
        <position position="360"/>
    </location>
</feature>
<feature type="binding site" evidence="1">
    <location>
        <position position="274"/>
    </location>
    <ligand>
        <name>Mn(2+)</name>
        <dbReference type="ChEBI" id="CHEBI:29035"/>
        <label>2</label>
    </ligand>
</feature>
<feature type="binding site" evidence="1">
    <location>
        <position position="279"/>
    </location>
    <ligand>
        <name>Mn(2+)</name>
        <dbReference type="ChEBI" id="CHEBI:29035"/>
        <label>1</label>
    </ligand>
</feature>
<feature type="binding site" evidence="1">
    <location>
        <position position="279"/>
    </location>
    <ligand>
        <name>Mn(2+)</name>
        <dbReference type="ChEBI" id="CHEBI:29035"/>
        <label>2</label>
    </ligand>
</feature>
<feature type="binding site" evidence="1">
    <location>
        <position position="297"/>
    </location>
    <ligand>
        <name>Mn(2+)</name>
        <dbReference type="ChEBI" id="CHEBI:29035"/>
        <label>2</label>
    </ligand>
</feature>
<feature type="binding site" evidence="1">
    <location>
        <position position="356"/>
    </location>
    <ligand>
        <name>Mn(2+)</name>
        <dbReference type="ChEBI" id="CHEBI:29035"/>
        <label>1</label>
    </ligand>
</feature>
<feature type="binding site" evidence="1">
    <location>
        <position position="358"/>
    </location>
    <ligand>
        <name>Mn(2+)</name>
        <dbReference type="ChEBI" id="CHEBI:29035"/>
        <label>1</label>
    </ligand>
</feature>
<feature type="binding site" evidence="1">
    <location>
        <position position="358"/>
    </location>
    <ligand>
        <name>Mn(2+)</name>
        <dbReference type="ChEBI" id="CHEBI:29035"/>
        <label>2</label>
    </ligand>
</feature>
<comment type="function">
    <text evidence="1">Presumably involved in the processing and regular turnover of intracellular proteins. Catalyzes the removal of unsubstituted N-terminal amino acids from various peptides.</text>
</comment>
<comment type="catalytic activity">
    <reaction evidence="1">
        <text>Release of an N-terminal amino acid, Xaa-|-Yaa-, in which Xaa is preferably Leu, but may be other amino acids including Pro although not Arg or Lys, and Yaa may be Pro. Amino acid amides and methyl esters are also readily hydrolyzed, but rates on arylamides are exceedingly low.</text>
        <dbReference type="EC" id="3.4.11.1"/>
    </reaction>
</comment>
<comment type="catalytic activity">
    <reaction evidence="1">
        <text>Release of an N-terminal amino acid, preferentially leucine, but not glutamic or aspartic acids.</text>
        <dbReference type="EC" id="3.4.11.10"/>
    </reaction>
</comment>
<comment type="cofactor">
    <cofactor evidence="1">
        <name>Mn(2+)</name>
        <dbReference type="ChEBI" id="CHEBI:29035"/>
    </cofactor>
    <text evidence="1">Binds 2 manganese ions per subunit.</text>
</comment>
<comment type="subcellular location">
    <subcellularLocation>
        <location evidence="1">Cytoplasm</location>
    </subcellularLocation>
</comment>
<comment type="similarity">
    <text evidence="1">Belongs to the peptidase M17 family.</text>
</comment>
<accession>A3N6U4</accession>
<name>AMPA_BURP6</name>
<gene>
    <name evidence="1" type="primary">pepA</name>
    <name type="ordered locus">BURPS668_1015</name>
</gene>
<keyword id="KW-0031">Aminopeptidase</keyword>
<keyword id="KW-0963">Cytoplasm</keyword>
<keyword id="KW-0378">Hydrolase</keyword>
<keyword id="KW-0464">Manganese</keyword>
<keyword id="KW-0479">Metal-binding</keyword>
<keyword id="KW-0645">Protease</keyword>
<reference key="1">
    <citation type="journal article" date="2010" name="Genome Biol. Evol.">
        <title>Continuing evolution of Burkholderia mallei through genome reduction and large-scale rearrangements.</title>
        <authorList>
            <person name="Losada L."/>
            <person name="Ronning C.M."/>
            <person name="DeShazer D."/>
            <person name="Woods D."/>
            <person name="Fedorova N."/>
            <person name="Kim H.S."/>
            <person name="Shabalina S.A."/>
            <person name="Pearson T.R."/>
            <person name="Brinkac L."/>
            <person name="Tan P."/>
            <person name="Nandi T."/>
            <person name="Crabtree J."/>
            <person name="Badger J."/>
            <person name="Beckstrom-Sternberg S."/>
            <person name="Saqib M."/>
            <person name="Schutzer S.E."/>
            <person name="Keim P."/>
            <person name="Nierman W.C."/>
        </authorList>
    </citation>
    <scope>NUCLEOTIDE SEQUENCE [LARGE SCALE GENOMIC DNA]</scope>
    <source>
        <strain>668</strain>
    </source>
</reference>